<protein>
    <recommendedName>
        <fullName evidence="1">Integration host factor subunit alpha</fullName>
        <shortName evidence="1">IHF-alpha</shortName>
    </recommendedName>
</protein>
<proteinExistence type="inferred from homology"/>
<organism>
    <name type="scientific">Brucella abortus (strain S19)</name>
    <dbReference type="NCBI Taxonomy" id="430066"/>
    <lineage>
        <taxon>Bacteria</taxon>
        <taxon>Pseudomonadati</taxon>
        <taxon>Pseudomonadota</taxon>
        <taxon>Alphaproteobacteria</taxon>
        <taxon>Hyphomicrobiales</taxon>
        <taxon>Brucellaceae</taxon>
        <taxon>Brucella/Ochrobactrum group</taxon>
        <taxon>Brucella</taxon>
    </lineage>
</organism>
<feature type="chain" id="PRO_1000122130" description="Integration host factor subunit alpha">
    <location>
        <begin position="1"/>
        <end position="107"/>
    </location>
</feature>
<name>IHFA_BRUA1</name>
<comment type="function">
    <text evidence="1">This protein is one of the two subunits of integration host factor, a specific DNA-binding protein that functions in genetic recombination as well as in transcriptional and translational control.</text>
</comment>
<comment type="subunit">
    <text evidence="1">Heterodimer of an alpha and a beta chain.</text>
</comment>
<comment type="similarity">
    <text evidence="1">Belongs to the bacterial histone-like protein family.</text>
</comment>
<accession>B2S525</accession>
<sequence length="107" mass="11972">MGGKTVTRADLAEAVYRKVGLSRTESAALVEMILDEVCDAIVNGETVKLSSFATFQVRDKNERIGRNPKTGEEVPILPRRVMTFKASNVLKQRILQEHQKRQGKTSK</sequence>
<dbReference type="EMBL" id="CP000887">
    <property type="protein sequence ID" value="ACD72272.1"/>
    <property type="molecule type" value="Genomic_DNA"/>
</dbReference>
<dbReference type="RefSeq" id="WP_002963914.1">
    <property type="nucleotide sequence ID" value="NC_010742.1"/>
</dbReference>
<dbReference type="SMR" id="B2S525"/>
<dbReference type="KEGG" id="bmc:BAbS19_I07480"/>
<dbReference type="HOGENOM" id="CLU_105066_1_1_5"/>
<dbReference type="Proteomes" id="UP000002565">
    <property type="component" value="Chromosome 1"/>
</dbReference>
<dbReference type="GO" id="GO:0005829">
    <property type="term" value="C:cytosol"/>
    <property type="evidence" value="ECO:0007669"/>
    <property type="project" value="TreeGrafter"/>
</dbReference>
<dbReference type="GO" id="GO:0003677">
    <property type="term" value="F:DNA binding"/>
    <property type="evidence" value="ECO:0007669"/>
    <property type="project" value="UniProtKB-UniRule"/>
</dbReference>
<dbReference type="GO" id="GO:0030527">
    <property type="term" value="F:structural constituent of chromatin"/>
    <property type="evidence" value="ECO:0007669"/>
    <property type="project" value="InterPro"/>
</dbReference>
<dbReference type="GO" id="GO:0006310">
    <property type="term" value="P:DNA recombination"/>
    <property type="evidence" value="ECO:0007669"/>
    <property type="project" value="UniProtKB-UniRule"/>
</dbReference>
<dbReference type="GO" id="GO:0009893">
    <property type="term" value="P:positive regulation of metabolic process"/>
    <property type="evidence" value="ECO:0007669"/>
    <property type="project" value="UniProtKB-ARBA"/>
</dbReference>
<dbReference type="GO" id="GO:0006355">
    <property type="term" value="P:regulation of DNA-templated transcription"/>
    <property type="evidence" value="ECO:0007669"/>
    <property type="project" value="UniProtKB-UniRule"/>
</dbReference>
<dbReference type="GO" id="GO:0006417">
    <property type="term" value="P:regulation of translation"/>
    <property type="evidence" value="ECO:0007669"/>
    <property type="project" value="UniProtKB-UniRule"/>
</dbReference>
<dbReference type="CDD" id="cd13835">
    <property type="entry name" value="IHF_A"/>
    <property type="match status" value="1"/>
</dbReference>
<dbReference type="Gene3D" id="4.10.520.10">
    <property type="entry name" value="IHF-like DNA-binding proteins"/>
    <property type="match status" value="1"/>
</dbReference>
<dbReference type="HAMAP" id="MF_00380">
    <property type="entry name" value="IHF_alpha"/>
    <property type="match status" value="1"/>
</dbReference>
<dbReference type="InterPro" id="IPR000119">
    <property type="entry name" value="Hist_DNA-bd"/>
</dbReference>
<dbReference type="InterPro" id="IPR020816">
    <property type="entry name" value="Histone-like_DNA-bd_CS"/>
</dbReference>
<dbReference type="InterPro" id="IPR010992">
    <property type="entry name" value="IHF-like_DNA-bd_dom_sf"/>
</dbReference>
<dbReference type="InterPro" id="IPR005684">
    <property type="entry name" value="IHF_alpha"/>
</dbReference>
<dbReference type="NCBIfam" id="TIGR00987">
    <property type="entry name" value="himA"/>
    <property type="match status" value="1"/>
</dbReference>
<dbReference type="NCBIfam" id="NF001401">
    <property type="entry name" value="PRK00285.1"/>
    <property type="match status" value="1"/>
</dbReference>
<dbReference type="PANTHER" id="PTHR33175">
    <property type="entry name" value="DNA-BINDING PROTEIN HU"/>
    <property type="match status" value="1"/>
</dbReference>
<dbReference type="PANTHER" id="PTHR33175:SF2">
    <property type="entry name" value="INTEGRATION HOST FACTOR SUBUNIT ALPHA"/>
    <property type="match status" value="1"/>
</dbReference>
<dbReference type="Pfam" id="PF00216">
    <property type="entry name" value="Bac_DNA_binding"/>
    <property type="match status" value="1"/>
</dbReference>
<dbReference type="PRINTS" id="PR01727">
    <property type="entry name" value="DNABINDINGHU"/>
</dbReference>
<dbReference type="SMART" id="SM00411">
    <property type="entry name" value="BHL"/>
    <property type="match status" value="1"/>
</dbReference>
<dbReference type="SUPFAM" id="SSF47729">
    <property type="entry name" value="IHF-like DNA-binding proteins"/>
    <property type="match status" value="1"/>
</dbReference>
<dbReference type="PROSITE" id="PS00045">
    <property type="entry name" value="HISTONE_LIKE"/>
    <property type="match status" value="1"/>
</dbReference>
<reference key="1">
    <citation type="journal article" date="2008" name="PLoS ONE">
        <title>Genome sequence of Brucella abortus vaccine strain S19 compared to virulent strains yields candidate virulence genes.</title>
        <authorList>
            <person name="Crasta O.R."/>
            <person name="Folkerts O."/>
            <person name="Fei Z."/>
            <person name="Mane S.P."/>
            <person name="Evans C."/>
            <person name="Martino-Catt S."/>
            <person name="Bricker B."/>
            <person name="Yu G."/>
            <person name="Du L."/>
            <person name="Sobral B.W."/>
        </authorList>
    </citation>
    <scope>NUCLEOTIDE SEQUENCE [LARGE SCALE GENOMIC DNA]</scope>
    <source>
        <strain>S19</strain>
    </source>
</reference>
<gene>
    <name evidence="1" type="primary">ihfA</name>
    <name evidence="1" type="synonym">himA</name>
    <name type="ordered locus">BAbS19_I07480</name>
</gene>
<evidence type="ECO:0000255" key="1">
    <source>
        <dbReference type="HAMAP-Rule" id="MF_00380"/>
    </source>
</evidence>
<keyword id="KW-0233">DNA recombination</keyword>
<keyword id="KW-0238">DNA-binding</keyword>
<keyword id="KW-0804">Transcription</keyword>
<keyword id="KW-0805">Transcription regulation</keyword>
<keyword id="KW-0810">Translation regulation</keyword>